<reference evidence="3" key="1">
    <citation type="journal article" date="1989" name="Comp. Biochem. Physiol.">
        <title>The relationship between N-terminal sequences and immunological characterization of crustacean hemocyanins.</title>
        <authorList>
            <person name="Neuteboom B."/>
            <person name="Sierdsema S.J."/>
            <person name="Beintema J.J."/>
        </authorList>
    </citation>
    <scope>PROTEIN SEQUENCE</scope>
    <source>
        <tissue>Hemolymph</tissue>
    </source>
</reference>
<keyword id="KW-0186">Copper</keyword>
<keyword id="KW-0903">Direct protein sequencing</keyword>
<keyword id="KW-0561">Oxygen transport</keyword>
<keyword id="KW-0964">Secreted</keyword>
<keyword id="KW-0813">Transport</keyword>
<organism evidence="3">
    <name type="scientific">Carcinus maenas</name>
    <name type="common">Common shore crab</name>
    <name type="synonym">Green crab</name>
    <dbReference type="NCBI Taxonomy" id="6759"/>
    <lineage>
        <taxon>Eukaryota</taxon>
        <taxon>Metazoa</taxon>
        <taxon>Ecdysozoa</taxon>
        <taxon>Arthropoda</taxon>
        <taxon>Crustacea</taxon>
        <taxon>Multicrustacea</taxon>
        <taxon>Malacostraca</taxon>
        <taxon>Eumalacostraca</taxon>
        <taxon>Eucarida</taxon>
        <taxon>Decapoda</taxon>
        <taxon>Pleocyemata</taxon>
        <taxon>Brachyura</taxon>
        <taxon>Eubrachyura</taxon>
        <taxon>Portunoidea</taxon>
        <taxon>Carcinidae</taxon>
        <taxon>Carcinus</taxon>
    </lineage>
</organism>
<accession>P83176</accession>
<protein>
    <recommendedName>
        <fullName>Hemocyanin subunit 1</fullName>
    </recommendedName>
</protein>
<name>HCY1_CARMA</name>
<evidence type="ECO:0000269" key="1">
    <source>
    </source>
</evidence>
<evidence type="ECO:0000303" key="2">
    <source>
    </source>
</evidence>
<evidence type="ECO:0000305" key="3"/>
<comment type="function">
    <text evidence="1">Hemocyanins are copper-containing oxygen carriers occurring freely dissolved in the hemolymph of many mollusks and arthropods.</text>
</comment>
<comment type="subcellular location">
    <subcellularLocation>
        <location>Secreted</location>
        <location>Extracellular space</location>
    </subcellularLocation>
</comment>
<comment type="tissue specificity">
    <text>Hemolymph.</text>
</comment>
<comment type="similarity">
    <text evidence="3">Belongs to the tyrosinase family. Hemocyanin subfamily.</text>
</comment>
<feature type="chain" id="PRO_0000204257" description="Hemocyanin subunit 1">
    <location>
        <begin position="1"/>
        <end position="12" status="greater than"/>
    </location>
</feature>
<feature type="non-terminal residue" evidence="2">
    <location>
        <position position="12"/>
    </location>
</feature>
<proteinExistence type="evidence at protein level"/>
<sequence>XDPASVSDAXKQ</sequence>
<dbReference type="PIR" id="C60529">
    <property type="entry name" value="C60529"/>
</dbReference>
<dbReference type="GO" id="GO:0005576">
    <property type="term" value="C:extracellular region"/>
    <property type="evidence" value="ECO:0007669"/>
    <property type="project" value="UniProtKB-SubCell"/>
</dbReference>
<dbReference type="GO" id="GO:0005344">
    <property type="term" value="F:oxygen carrier activity"/>
    <property type="evidence" value="ECO:0000314"/>
    <property type="project" value="UniProtKB"/>
</dbReference>
<dbReference type="GO" id="GO:0015671">
    <property type="term" value="P:oxygen transport"/>
    <property type="evidence" value="ECO:0000304"/>
    <property type="project" value="UniProtKB"/>
</dbReference>